<accession>B7V0S0</accession>
<evidence type="ECO:0000255" key="1">
    <source>
        <dbReference type="HAMAP-Rule" id="MF_00131"/>
    </source>
</evidence>
<proteinExistence type="inferred from homology"/>
<reference key="1">
    <citation type="journal article" date="2009" name="Genome Res.">
        <title>Newly introduced genomic prophage islands are critical determinants of in vivo competitiveness in the Liverpool epidemic strain of Pseudomonas aeruginosa.</title>
        <authorList>
            <person name="Winstanley C."/>
            <person name="Langille M.G.I."/>
            <person name="Fothergill J.L."/>
            <person name="Kukavica-Ibrulj I."/>
            <person name="Paradis-Bleau C."/>
            <person name="Sanschagrin F."/>
            <person name="Thomson N.R."/>
            <person name="Winsor G.L."/>
            <person name="Quail M.A."/>
            <person name="Lennard N."/>
            <person name="Bignell A."/>
            <person name="Clarke L."/>
            <person name="Seeger K."/>
            <person name="Saunders D."/>
            <person name="Harris D."/>
            <person name="Parkhill J."/>
            <person name="Hancock R.E.W."/>
            <person name="Brinkman F.S.L."/>
            <person name="Levesque R.C."/>
        </authorList>
    </citation>
    <scope>NUCLEOTIDE SEQUENCE [LARGE SCALE GENOMIC DNA]</scope>
    <source>
        <strain>LESB58</strain>
    </source>
</reference>
<name>TRPA_PSEA8</name>
<protein>
    <recommendedName>
        <fullName evidence="1">Tryptophan synthase alpha chain</fullName>
        <ecNumber evidence="1">4.2.1.20</ecNumber>
    </recommendedName>
</protein>
<keyword id="KW-0028">Amino-acid biosynthesis</keyword>
<keyword id="KW-0057">Aromatic amino acid biosynthesis</keyword>
<keyword id="KW-0456">Lyase</keyword>
<keyword id="KW-0822">Tryptophan biosynthesis</keyword>
<comment type="function">
    <text evidence="1">The alpha subunit is responsible for the aldol cleavage of indoleglycerol phosphate to indole and glyceraldehyde 3-phosphate.</text>
</comment>
<comment type="catalytic activity">
    <reaction evidence="1">
        <text>(1S,2R)-1-C-(indol-3-yl)glycerol 3-phosphate + L-serine = D-glyceraldehyde 3-phosphate + L-tryptophan + H2O</text>
        <dbReference type="Rhea" id="RHEA:10532"/>
        <dbReference type="ChEBI" id="CHEBI:15377"/>
        <dbReference type="ChEBI" id="CHEBI:33384"/>
        <dbReference type="ChEBI" id="CHEBI:57912"/>
        <dbReference type="ChEBI" id="CHEBI:58866"/>
        <dbReference type="ChEBI" id="CHEBI:59776"/>
        <dbReference type="EC" id="4.2.1.20"/>
    </reaction>
</comment>
<comment type="pathway">
    <text evidence="1">Amino-acid biosynthesis; L-tryptophan biosynthesis; L-tryptophan from chorismate: step 5/5.</text>
</comment>
<comment type="subunit">
    <text evidence="1">Tetramer of two alpha and two beta chains.</text>
</comment>
<comment type="similarity">
    <text evidence="1">Belongs to the TrpA family.</text>
</comment>
<gene>
    <name evidence="1" type="primary">trpA</name>
    <name type="ordered locus">PLES_00341</name>
</gene>
<dbReference type="EC" id="4.2.1.20" evidence="1"/>
<dbReference type="EMBL" id="FM209186">
    <property type="protein sequence ID" value="CAW24762.1"/>
    <property type="molecule type" value="Genomic_DNA"/>
</dbReference>
<dbReference type="RefSeq" id="WP_003158557.1">
    <property type="nucleotide sequence ID" value="NC_011770.1"/>
</dbReference>
<dbReference type="SMR" id="B7V0S0"/>
<dbReference type="KEGG" id="pag:PLES_00341"/>
<dbReference type="HOGENOM" id="CLU_016734_0_4_6"/>
<dbReference type="UniPathway" id="UPA00035">
    <property type="reaction ID" value="UER00044"/>
</dbReference>
<dbReference type="GO" id="GO:0005829">
    <property type="term" value="C:cytosol"/>
    <property type="evidence" value="ECO:0007669"/>
    <property type="project" value="TreeGrafter"/>
</dbReference>
<dbReference type="GO" id="GO:0004834">
    <property type="term" value="F:tryptophan synthase activity"/>
    <property type="evidence" value="ECO:0007669"/>
    <property type="project" value="UniProtKB-UniRule"/>
</dbReference>
<dbReference type="CDD" id="cd04724">
    <property type="entry name" value="Tryptophan_synthase_alpha"/>
    <property type="match status" value="1"/>
</dbReference>
<dbReference type="FunFam" id="3.20.20.70:FF:000037">
    <property type="entry name" value="Tryptophan synthase alpha chain"/>
    <property type="match status" value="1"/>
</dbReference>
<dbReference type="Gene3D" id="3.20.20.70">
    <property type="entry name" value="Aldolase class I"/>
    <property type="match status" value="1"/>
</dbReference>
<dbReference type="HAMAP" id="MF_00131">
    <property type="entry name" value="Trp_synth_alpha"/>
    <property type="match status" value="1"/>
</dbReference>
<dbReference type="InterPro" id="IPR013785">
    <property type="entry name" value="Aldolase_TIM"/>
</dbReference>
<dbReference type="InterPro" id="IPR011060">
    <property type="entry name" value="RibuloseP-bd_barrel"/>
</dbReference>
<dbReference type="InterPro" id="IPR018204">
    <property type="entry name" value="Trp_synthase_alpha_AS"/>
</dbReference>
<dbReference type="InterPro" id="IPR002028">
    <property type="entry name" value="Trp_synthase_suA"/>
</dbReference>
<dbReference type="NCBIfam" id="TIGR00262">
    <property type="entry name" value="trpA"/>
    <property type="match status" value="1"/>
</dbReference>
<dbReference type="PANTHER" id="PTHR43406:SF1">
    <property type="entry name" value="TRYPTOPHAN SYNTHASE ALPHA CHAIN, CHLOROPLASTIC"/>
    <property type="match status" value="1"/>
</dbReference>
<dbReference type="PANTHER" id="PTHR43406">
    <property type="entry name" value="TRYPTOPHAN SYNTHASE, ALPHA CHAIN"/>
    <property type="match status" value="1"/>
</dbReference>
<dbReference type="Pfam" id="PF00290">
    <property type="entry name" value="Trp_syntA"/>
    <property type="match status" value="1"/>
</dbReference>
<dbReference type="SUPFAM" id="SSF51366">
    <property type="entry name" value="Ribulose-phoshate binding barrel"/>
    <property type="match status" value="1"/>
</dbReference>
<dbReference type="PROSITE" id="PS00167">
    <property type="entry name" value="TRP_SYNTHASE_ALPHA"/>
    <property type="match status" value="1"/>
</dbReference>
<sequence length="268" mass="28502">MSRLQTRFAQLKQENRAALVTFVTAGDPDYASSLEILKGLPAAGADVIELGMPFTDPMADGPAIQLANIRALDGGQTLARTLQMVREFRSGESETPLVLMGYFNPIHHYGVERFIAEAKEVGVDGLIVVDLPPEHNEDLCHPAQAAGLDFIRLTTPTTGDQRLPTVLEGSSGFVYYVSVAGVTGANAATLEHVEEAVARLRRHTDLPIGIGFGIRSAEHAAAVARLADGVVVGSALIDRIAKARDNAQAVKDVLALCGELAEGVRNAR</sequence>
<feature type="chain" id="PRO_1000117744" description="Tryptophan synthase alpha chain">
    <location>
        <begin position="1"/>
        <end position="268"/>
    </location>
</feature>
<feature type="active site" description="Proton acceptor" evidence="1">
    <location>
        <position position="49"/>
    </location>
</feature>
<feature type="active site" description="Proton acceptor" evidence="1">
    <location>
        <position position="60"/>
    </location>
</feature>
<organism>
    <name type="scientific">Pseudomonas aeruginosa (strain LESB58)</name>
    <dbReference type="NCBI Taxonomy" id="557722"/>
    <lineage>
        <taxon>Bacteria</taxon>
        <taxon>Pseudomonadati</taxon>
        <taxon>Pseudomonadota</taxon>
        <taxon>Gammaproteobacteria</taxon>
        <taxon>Pseudomonadales</taxon>
        <taxon>Pseudomonadaceae</taxon>
        <taxon>Pseudomonas</taxon>
    </lineage>
</organism>